<evidence type="ECO:0000255" key="1"/>
<evidence type="ECO:0000255" key="2">
    <source>
        <dbReference type="PROSITE-ProRule" id="PRU01098"/>
    </source>
</evidence>
<evidence type="ECO:0000255" key="3">
    <source>
        <dbReference type="PROSITE-ProRule" id="PRU10064"/>
    </source>
</evidence>
<evidence type="ECO:0000269" key="4">
    <source>
    </source>
</evidence>
<evidence type="ECO:0000269" key="5">
    <source ref="3"/>
</evidence>
<evidence type="ECO:0000305" key="6"/>
<evidence type="ECO:0007829" key="7">
    <source>
        <dbReference type="PDB" id="1AJO"/>
    </source>
</evidence>
<evidence type="ECO:0007829" key="8">
    <source>
        <dbReference type="PDB" id="1CPM"/>
    </source>
</evidence>
<evidence type="ECO:0007829" key="9">
    <source>
        <dbReference type="PDB" id="1GLH"/>
    </source>
</evidence>
<evidence type="ECO:0007829" key="10">
    <source>
        <dbReference type="PDB" id="2AYH"/>
    </source>
</evidence>
<name>GUB_PAEMA</name>
<organism>
    <name type="scientific">Paenibacillus macerans</name>
    <name type="common">Bacillus macerans</name>
    <dbReference type="NCBI Taxonomy" id="44252"/>
    <lineage>
        <taxon>Bacteria</taxon>
        <taxon>Bacillati</taxon>
        <taxon>Bacillota</taxon>
        <taxon>Bacilli</taxon>
        <taxon>Bacillales</taxon>
        <taxon>Paenibacillaceae</taxon>
        <taxon>Paenibacillus</taxon>
    </lineage>
</organism>
<protein>
    <recommendedName>
        <fullName>Beta-glucanase</fullName>
        <ecNumber>3.2.1.73</ecNumber>
    </recommendedName>
    <alternativeName>
        <fullName>1,3-1,4-beta-D-glucan 4-glucanohydrolase</fullName>
    </alternativeName>
    <alternativeName>
        <fullName>Endo-beta-1,3-1,4 glucanase</fullName>
    </alternativeName>
    <alternativeName>
        <fullName>Lichenase</fullName>
    </alternativeName>
</protein>
<sequence length="237" mass="26589">MKKKSCFTLVTTFAFSLIFSVSALAGSVFWEPLSYFNRSTWEKADGYSNGGVFNCTWRANNVNFTNDGKLKLGLTSSAYNKFDCAEYRSTNIYGYGLYEVSMKPAKNTGIVSSFFTYTGPAHGTQWDEIDIEFLGKDTTKVQFNYYTNGVGGHEKVISLGFDASKGFHTYAFDWQPGYIKWYVDGVLKHTATANIPSTPGKIMMNLWNGTGVDDWLGSYNGANPLYAEYDWVKYTSN</sequence>
<comment type="catalytic activity">
    <reaction>
        <text>Hydrolysis of (1-&gt;4)-beta-D-glucosidic linkages in beta-D-glucans containing (1-&gt;3)- and (1-&gt;4)-bonds.</text>
        <dbReference type="EC" id="3.2.1.73"/>
    </reaction>
</comment>
<comment type="miscellaneous">
    <text>Beta-glucanases of Bacillus have a substrate range similar to lichenase of germinating barley.</text>
</comment>
<comment type="similarity">
    <text evidence="6">Belongs to the glycosyl hydrolase 16 family.</text>
</comment>
<keyword id="KW-0002">3D-structure</keyword>
<keyword id="KW-1015">Disulfide bond</keyword>
<keyword id="KW-0326">Glycosidase</keyword>
<keyword id="KW-0378">Hydrolase</keyword>
<keyword id="KW-0732">Signal</keyword>
<accession>P23904</accession>
<dbReference type="EC" id="3.2.1.73"/>
<dbReference type="EMBL" id="X55959">
    <property type="protein sequence ID" value="CAA39426.1"/>
    <property type="molecule type" value="Genomic_DNA"/>
</dbReference>
<dbReference type="PIR" id="S11927">
    <property type="entry name" value="S11927"/>
</dbReference>
<dbReference type="PDB" id="1AJK">
    <property type="method" value="X-ray"/>
    <property type="resolution" value="1.80 A"/>
    <property type="chains" value="A/B=107-237"/>
</dbReference>
<dbReference type="PDB" id="1AJO">
    <property type="method" value="X-ray"/>
    <property type="resolution" value="2.07 A"/>
    <property type="chains" value="A/B=37-149"/>
</dbReference>
<dbReference type="PDB" id="1AXK">
    <property type="method" value="X-ray"/>
    <property type="resolution" value="2.10 A"/>
    <property type="chains" value="A/B=82-237"/>
</dbReference>
<dbReference type="PDB" id="1BYH">
    <property type="method" value="X-ray"/>
    <property type="resolution" value="2.80 A"/>
    <property type="chains" value="A=40-237"/>
</dbReference>
<dbReference type="PDB" id="1CPM">
    <property type="method" value="X-ray"/>
    <property type="resolution" value="2.00 A"/>
    <property type="chains" value="A=82-237"/>
</dbReference>
<dbReference type="PDB" id="1CPN">
    <property type="method" value="X-ray"/>
    <property type="resolution" value="1.80 A"/>
    <property type="chains" value="A=82-237"/>
</dbReference>
<dbReference type="PDB" id="1GLH">
    <property type="method" value="X-ray"/>
    <property type="resolution" value="2.00 A"/>
    <property type="chains" value="A=37-237"/>
</dbReference>
<dbReference type="PDB" id="1MAC">
    <property type="method" value="X-ray"/>
    <property type="resolution" value="2.30 A"/>
    <property type="chains" value="A/B=26-237"/>
</dbReference>
<dbReference type="PDB" id="1U0A">
    <property type="method" value="X-ray"/>
    <property type="resolution" value="1.64 A"/>
    <property type="chains" value="A/B/C/D=37-237"/>
</dbReference>
<dbReference type="PDB" id="2AYH">
    <property type="method" value="X-ray"/>
    <property type="resolution" value="1.60 A"/>
    <property type="chains" value="A=37-237"/>
</dbReference>
<dbReference type="PDBsum" id="1AJK"/>
<dbReference type="PDBsum" id="1AJO"/>
<dbReference type="PDBsum" id="1AXK"/>
<dbReference type="PDBsum" id="1BYH"/>
<dbReference type="PDBsum" id="1CPM"/>
<dbReference type="PDBsum" id="1CPN"/>
<dbReference type="PDBsum" id="1GLH"/>
<dbReference type="PDBsum" id="1MAC"/>
<dbReference type="PDBsum" id="1U0A"/>
<dbReference type="PDBsum" id="2AYH"/>
<dbReference type="SMR" id="P23904"/>
<dbReference type="STRING" id="44252.DJ90_6408"/>
<dbReference type="DrugBank" id="DB02379">
    <property type="generic name" value="Beta-D-Glucose"/>
</dbReference>
<dbReference type="CAZy" id="GH16">
    <property type="family name" value="Glycoside Hydrolase Family 16"/>
</dbReference>
<dbReference type="EvolutionaryTrace" id="P23904"/>
<dbReference type="GO" id="GO:0042972">
    <property type="term" value="F:licheninase activity"/>
    <property type="evidence" value="ECO:0007669"/>
    <property type="project" value="UniProtKB-EC"/>
</dbReference>
<dbReference type="GO" id="GO:0005975">
    <property type="term" value="P:carbohydrate metabolic process"/>
    <property type="evidence" value="ECO:0007669"/>
    <property type="project" value="InterPro"/>
</dbReference>
<dbReference type="CDD" id="cd02175">
    <property type="entry name" value="GH16_lichenase"/>
    <property type="match status" value="1"/>
</dbReference>
<dbReference type="Gene3D" id="2.60.120.200">
    <property type="match status" value="1"/>
</dbReference>
<dbReference type="InterPro" id="IPR044791">
    <property type="entry name" value="Beta-glucanase/XTH"/>
</dbReference>
<dbReference type="InterPro" id="IPR008264">
    <property type="entry name" value="Beta_glucanase"/>
</dbReference>
<dbReference type="InterPro" id="IPR013320">
    <property type="entry name" value="ConA-like_dom_sf"/>
</dbReference>
<dbReference type="InterPro" id="IPR000757">
    <property type="entry name" value="GH16"/>
</dbReference>
<dbReference type="InterPro" id="IPR008263">
    <property type="entry name" value="GH16_AS"/>
</dbReference>
<dbReference type="NCBIfam" id="NF047856">
    <property type="entry name" value="BGlucanaseBglS"/>
    <property type="match status" value="1"/>
</dbReference>
<dbReference type="PANTHER" id="PTHR31062">
    <property type="entry name" value="XYLOGLUCAN ENDOTRANSGLUCOSYLASE/HYDROLASE PROTEIN 8-RELATED"/>
    <property type="match status" value="1"/>
</dbReference>
<dbReference type="Pfam" id="PF00722">
    <property type="entry name" value="Glyco_hydro_16"/>
    <property type="match status" value="1"/>
</dbReference>
<dbReference type="PRINTS" id="PR00737">
    <property type="entry name" value="GLHYDRLASE16"/>
</dbReference>
<dbReference type="SUPFAM" id="SSF49899">
    <property type="entry name" value="Concanavalin A-like lectins/glucanases"/>
    <property type="match status" value="1"/>
</dbReference>
<dbReference type="PROSITE" id="PS01034">
    <property type="entry name" value="GH16_1"/>
    <property type="match status" value="1"/>
</dbReference>
<dbReference type="PROSITE" id="PS51762">
    <property type="entry name" value="GH16_2"/>
    <property type="match status" value="1"/>
</dbReference>
<reference key="1">
    <citation type="journal article" date="1990" name="Mol. Gen. Genet.">
        <title>Structure of the beta-1,3-1,4-glucanase gene of Bacillus macerans: homologies to other beta-glucanases.</title>
        <authorList>
            <person name="Borriss R."/>
            <person name="Buettner K."/>
            <person name="Maentsaelae P."/>
        </authorList>
    </citation>
    <scope>NUCLEOTIDE SEQUENCE [GENOMIC DNA]</scope>
</reference>
<reference key="2">
    <citation type="journal article" date="1992" name="J. Biol. Chem.">
        <title>Identification of glutamic acid 105 at the active site of Bacillus amyloliquefaciens 1,3-1,4-beta-D-glucan 4-glucanohydrolase using epoxide-based inhibitors.</title>
        <authorList>
            <person name="Hoej P.B."/>
            <person name="Condron R."/>
            <person name="Traeger J.C."/>
            <person name="McAuliffe J.C."/>
            <person name="Stone B.A."/>
        </authorList>
    </citation>
    <scope>ACTIVE SITE</scope>
</reference>
<reference key="3">
    <citation type="thesis" date="1990" institute="University of Aarhus" country="Denmark">
        <authorList>
            <person name="Olsen O."/>
        </authorList>
    </citation>
    <scope>MUTAGENESIS OF GLU-128</scope>
</reference>
<reference key="4">
    <citation type="journal article" date="1993" name="Proc. Natl. Acad. Sci. U.S.A.">
        <title>Molecular and active-site structure of a Bacillus 1,3-1,4-beta-glucanase.</title>
        <authorList>
            <person name="Keitel T."/>
            <person name="Simon O."/>
            <person name="Borriss R."/>
            <person name="Heinemann U."/>
        </authorList>
    </citation>
    <scope>X-RAY CRYSTALLOGRAPHY (2.0 ANGSTROMS)</scope>
</reference>
<reference key="5">
    <citation type="journal article" date="1995" name="Eur. J. Biochem.">
        <title>Crystal and molecular structure at 0.16-nm resolution of the hybrid Bacillus endo-1,3-1,4-beta-D-glucan 4-glucanohydrolase H(A16-M).</title>
        <authorList>
            <person name="Hahn M."/>
            <person name="Keitel T."/>
            <person name="Heinemann U."/>
        </authorList>
    </citation>
    <scope>X-RAY CRYSTALLOGRAPHY (1.6 ANGSTROMS)</scope>
</reference>
<feature type="signal peptide" evidence="1">
    <location>
        <begin position="1"/>
        <end position="23"/>
    </location>
</feature>
<feature type="chain" id="PRO_0000011789" description="Beta-glucanase">
    <location>
        <begin position="24"/>
        <end position="237"/>
    </location>
</feature>
<feature type="domain" description="GH16" evidence="2">
    <location>
        <begin position="28"/>
        <end position="237"/>
    </location>
</feature>
<feature type="active site" description="Nucleophile" evidence="3">
    <location>
        <position position="128"/>
    </location>
</feature>
<feature type="active site" description="Proton donor" evidence="3">
    <location>
        <position position="132"/>
    </location>
</feature>
<feature type="disulfide bond" evidence="4">
    <location>
        <begin position="55"/>
        <end position="84"/>
    </location>
</feature>
<feature type="mutagenesis site" description="Loss of activity." evidence="5">
    <original>E</original>
    <variation>D</variation>
    <variation>N</variation>
    <variation>A</variation>
    <variation>L</variation>
    <variation>P</variation>
    <variation>R</variation>
    <variation>H</variation>
    <variation>C</variation>
    <variation>S</variation>
    <variation>Y</variation>
    <location>
        <position position="128"/>
    </location>
</feature>
<feature type="strand" evidence="7">
    <location>
        <begin position="15"/>
        <end position="24"/>
    </location>
</feature>
<feature type="strand" evidence="10">
    <location>
        <begin position="29"/>
        <end position="31"/>
    </location>
</feature>
<feature type="strand" evidence="10">
    <location>
        <begin position="38"/>
        <end position="43"/>
    </location>
</feature>
<feature type="strand" evidence="9">
    <location>
        <begin position="46"/>
        <end position="48"/>
    </location>
</feature>
<feature type="strand" evidence="10">
    <location>
        <begin position="55"/>
        <end position="57"/>
    </location>
</feature>
<feature type="helix" evidence="10">
    <location>
        <begin position="59"/>
        <end position="61"/>
    </location>
</feature>
<feature type="strand" evidence="10">
    <location>
        <begin position="62"/>
        <end position="64"/>
    </location>
</feature>
<feature type="strand" evidence="10">
    <location>
        <begin position="70"/>
        <end position="78"/>
    </location>
</feature>
<feature type="strand" evidence="10">
    <location>
        <begin position="81"/>
        <end position="91"/>
    </location>
</feature>
<feature type="strand" evidence="10">
    <location>
        <begin position="95"/>
        <end position="103"/>
    </location>
</feature>
<feature type="strand" evidence="10">
    <location>
        <begin position="110"/>
        <end position="118"/>
    </location>
</feature>
<feature type="helix" evidence="10">
    <location>
        <begin position="120"/>
        <end position="122"/>
    </location>
</feature>
<feature type="strand" evidence="10">
    <location>
        <begin position="127"/>
        <end position="134"/>
    </location>
</feature>
<feature type="helix" evidence="8">
    <location>
        <begin position="135"/>
        <end position="137"/>
    </location>
</feature>
<feature type="strand" evidence="10">
    <location>
        <begin position="140"/>
        <end position="147"/>
    </location>
</feature>
<feature type="strand" evidence="10">
    <location>
        <begin position="155"/>
        <end position="158"/>
    </location>
</feature>
<feature type="helix" evidence="10">
    <location>
        <begin position="163"/>
        <end position="165"/>
    </location>
</feature>
<feature type="strand" evidence="10">
    <location>
        <begin position="168"/>
        <end position="175"/>
    </location>
</feature>
<feature type="strand" evidence="10">
    <location>
        <begin position="178"/>
        <end position="183"/>
    </location>
</feature>
<feature type="strand" evidence="10">
    <location>
        <begin position="186"/>
        <end position="191"/>
    </location>
</feature>
<feature type="strand" evidence="10">
    <location>
        <begin position="200"/>
        <end position="211"/>
    </location>
</feature>
<feature type="helix" evidence="10">
    <location>
        <begin position="213"/>
        <end position="216"/>
    </location>
</feature>
<feature type="strand" evidence="10">
    <location>
        <begin position="225"/>
        <end position="236"/>
    </location>
</feature>
<proteinExistence type="evidence at protein level"/>